<protein>
    <recommendedName>
        <fullName>Melanoma-associated antigen D1</fullName>
    </recommendedName>
    <alternativeName>
        <fullName>MAGE-D1 antigen</fullName>
    </alternativeName>
    <alternativeName>
        <fullName>Neurotrophin receptor-interacting MAGE homolog</fullName>
    </alternativeName>
    <alternativeName>
        <fullName>Sertoli cell necdin-related gene protein 1</fullName>
        <shortName>SNERG-1</shortName>
    </alternativeName>
</protein>
<comment type="function">
    <text evidence="4">Involved in the apoptotic response after nerve growth factor (NGF) binding in neuronal cells. Inhibits cell cycle progression, and facilitates NGFR-mediated apoptosis. May act as a regulator of the function of DLX family members. May enhance ubiquitin ligase activity of RING-type zinc finger-containing E3 ubiquitin-protein ligases. Proposed to act through recruitment and/or stabilization of the Ubl-conjugating enzyme (E2) at the E3:substrate complex. Plays a role in the circadian rhythm regulation. May act as RORA co-regulator, modulating the expression of core clock genes such as BMAL1 and NFIL3, induced, or NR1D1, repressed.</text>
</comment>
<comment type="subunit">
    <text evidence="4 5">Interacts with DLX5, DLX7 and MSX2 and forms homomultimers. Interacts with UNC5A. Interacts with TRIM28 and PJA1. Interacts with NGFR/p75NTR and RORA.</text>
</comment>
<comment type="subcellular location">
    <subcellularLocation>
        <location>Cytoplasm</location>
    </subcellularLocation>
    <subcellularLocation>
        <location>Cell membrane</location>
        <topology>Peripheral membrane protein</topology>
    </subcellularLocation>
    <subcellularLocation>
        <location evidence="1">Nucleus</location>
    </subcellularLocation>
    <text>Expression shifts from the cytoplasm to the plasma membrane upon stimulation with NGF.</text>
</comment>
<comment type="tissue specificity">
    <text>Ubiquitous and in the seminiferous tubules expressed in Sertoli cells but not in germ cells. Expression decreases in all tissues with increased age and is detectable only in brain cortex and lung.</text>
</comment>
<comment type="developmental stage">
    <text>Expressed at low levels throughout the embryo and is enriched in the developing brain and spinal cord.</text>
</comment>
<comment type="induction">
    <text>Follitropin decreased expression while lutropin and prolactin stimulated expression.</text>
</comment>
<comment type="sequence caution" evidence="6">
    <conflict type="frameshift">
        <sequence resource="EMBL-CDS" id="CAB65381"/>
    </conflict>
</comment>
<proteinExistence type="evidence at protein level"/>
<sequence length="775" mass="85798">MAQKPDGGAGLRGFQAEASVEDSALLVQTLMEAIQISEAPPTSQATAAASGPNASPQSSQPPTANEKADTEVSAAAARPKTGFKAQNTTTKGPNDYSQARNAKEMPKNQPKVAFKSQNATSKGPHAASDFSHAASTGKSAAKKSEMAFKGQNTTTKAGPSATYNFTQSPSANEMTNNQPKTAKAWNDTTKIPGADAQTQNVNQAKMADVGTSAGISETDGAAAQTSADGSQAQNVESRTIIRGKRTRKINNLNVEENSNGDQRRASLASGNWRSAPVPVTTQNPPGAPPNVLWQTPLAWQNPSGWQNQTARQTPPARQSPPARQTPSAWQNPVAWQNPVIWPNPVIWQNPVIWPNPIVWPGPIVWPNPMAWQSTPGWQSPPSWQAPPSWQSPQDWQGPPDWQLPPDWSMPPDWSFPSDWPFPPDWIPADWPIPPDWQNLRPSPNLRSSPNSRASQNQGPPQPRDVALLQERANKLVKYLMLKDYTKVPIKRSEMLRDIIREYTDVYPEIIERACFVLEKKFGIQLKEIDKEEHLYILISTPESLAGILGTTKDTPKLGLLLVILGIIFMNGNRATEAVLWEALRKMGLRPGVRHPLLGDLRKLLTYEFVKQKYLDYRRVPNSNPPEYEFLWGLRSYHETSKMKVLRFIAEVQKRDPRDWTAQFMEAADEALDALDAAAAEAEARAEARNRMGIGDEAVSGPWSWDDIEFELLTWDEEGDFGDPWSRIPFTFWARYHQNARSRFPQAFTGPIIGPSGTATANFAANFGAIGFFWVE</sequence>
<organism>
    <name type="scientific">Rattus norvegicus</name>
    <name type="common">Rat</name>
    <dbReference type="NCBI Taxonomy" id="10116"/>
    <lineage>
        <taxon>Eukaryota</taxon>
        <taxon>Metazoa</taxon>
        <taxon>Chordata</taxon>
        <taxon>Craniata</taxon>
        <taxon>Vertebrata</taxon>
        <taxon>Euteleostomi</taxon>
        <taxon>Mammalia</taxon>
        <taxon>Eutheria</taxon>
        <taxon>Euarchontoglires</taxon>
        <taxon>Glires</taxon>
        <taxon>Rodentia</taxon>
        <taxon>Myomorpha</taxon>
        <taxon>Muroidea</taxon>
        <taxon>Muridae</taxon>
        <taxon>Murinae</taxon>
        <taxon>Rattus</taxon>
    </lineage>
</organism>
<dbReference type="EMBL" id="AF217964">
    <property type="protein sequence ID" value="AAG09705.1"/>
    <property type="molecule type" value="mRNA"/>
</dbReference>
<dbReference type="EMBL" id="BC081756">
    <property type="protein sequence ID" value="AAH81756.1"/>
    <property type="molecule type" value="mRNA"/>
</dbReference>
<dbReference type="EMBL" id="AJ133038">
    <property type="protein sequence ID" value="CAB65381.1"/>
    <property type="status" value="ALT_FRAME"/>
    <property type="molecule type" value="mRNA"/>
</dbReference>
<dbReference type="EMBL" id="AF274043">
    <property type="protein sequence ID" value="AAF75283.1"/>
    <property type="molecule type" value="mRNA"/>
</dbReference>
<dbReference type="RefSeq" id="NP_445861.1">
    <property type="nucleotide sequence ID" value="NM_053409.2"/>
</dbReference>
<dbReference type="SMR" id="Q9ES73"/>
<dbReference type="BioGRID" id="249969">
    <property type="interactions" value="2"/>
</dbReference>
<dbReference type="FunCoup" id="Q9ES73">
    <property type="interactions" value="346"/>
</dbReference>
<dbReference type="STRING" id="10116.ENSRNOP00000009870"/>
<dbReference type="GlyGen" id="Q9ES73">
    <property type="glycosylation" value="1 site"/>
</dbReference>
<dbReference type="iPTMnet" id="Q9ES73"/>
<dbReference type="PhosphoSitePlus" id="Q9ES73"/>
<dbReference type="jPOST" id="Q9ES73"/>
<dbReference type="PaxDb" id="10116-ENSRNOP00000009870"/>
<dbReference type="Ensembl" id="ENSRNOT00000009870.7">
    <property type="protein sequence ID" value="ENSRNOP00000009870.3"/>
    <property type="gene ID" value="ENSRNOG00000006756.9"/>
</dbReference>
<dbReference type="GeneID" id="84469"/>
<dbReference type="KEGG" id="rno:84469"/>
<dbReference type="AGR" id="RGD:70898"/>
<dbReference type="CTD" id="9500"/>
<dbReference type="RGD" id="70898">
    <property type="gene designation" value="Maged1"/>
</dbReference>
<dbReference type="eggNOG" id="KOG4562">
    <property type="taxonomic scope" value="Eukaryota"/>
</dbReference>
<dbReference type="GeneTree" id="ENSGT00940000162070"/>
<dbReference type="HOGENOM" id="CLU_394113_0_0_1"/>
<dbReference type="InParanoid" id="Q9ES73"/>
<dbReference type="OMA" id="PNPMAWQ"/>
<dbReference type="OrthoDB" id="67045at9989"/>
<dbReference type="PhylomeDB" id="Q9ES73"/>
<dbReference type="Reactome" id="R-RNO-9768919">
    <property type="pathway name" value="NPAS4 regulates expression of target genes"/>
</dbReference>
<dbReference type="PRO" id="PR:Q9ES73"/>
<dbReference type="Proteomes" id="UP000002494">
    <property type="component" value="Chromosome X"/>
</dbReference>
<dbReference type="Bgee" id="ENSRNOG00000006756">
    <property type="expression patterns" value="Expressed in ovary and 20 other cell types or tissues"/>
</dbReference>
<dbReference type="ExpressionAtlas" id="Q9ES73">
    <property type="expression patterns" value="baseline and differential"/>
</dbReference>
<dbReference type="GO" id="GO:0000785">
    <property type="term" value="C:chromatin"/>
    <property type="evidence" value="ECO:0000250"/>
    <property type="project" value="UniProtKB"/>
</dbReference>
<dbReference type="GO" id="GO:0005829">
    <property type="term" value="C:cytosol"/>
    <property type="evidence" value="ECO:0000304"/>
    <property type="project" value="Reactome"/>
</dbReference>
<dbReference type="GO" id="GO:0005634">
    <property type="term" value="C:nucleus"/>
    <property type="evidence" value="ECO:0000250"/>
    <property type="project" value="UniProtKB"/>
</dbReference>
<dbReference type="GO" id="GO:0005886">
    <property type="term" value="C:plasma membrane"/>
    <property type="evidence" value="ECO:0007669"/>
    <property type="project" value="UniProtKB-SubCell"/>
</dbReference>
<dbReference type="GO" id="GO:0032991">
    <property type="term" value="C:protein-containing complex"/>
    <property type="evidence" value="ECO:0000266"/>
    <property type="project" value="RGD"/>
</dbReference>
<dbReference type="GO" id="GO:0042802">
    <property type="term" value="F:identical protein binding"/>
    <property type="evidence" value="ECO:0000266"/>
    <property type="project" value="RGD"/>
</dbReference>
<dbReference type="GO" id="GO:0004705">
    <property type="term" value="F:JUN kinase activity"/>
    <property type="evidence" value="ECO:0000304"/>
    <property type="project" value="Reactome"/>
</dbReference>
<dbReference type="GO" id="GO:0003713">
    <property type="term" value="F:transcription coactivator activity"/>
    <property type="evidence" value="ECO:0000266"/>
    <property type="project" value="RGD"/>
</dbReference>
<dbReference type="GO" id="GO:0032922">
    <property type="term" value="P:circadian regulation of gene expression"/>
    <property type="evidence" value="ECO:0000250"/>
    <property type="project" value="UniProtKB"/>
</dbReference>
<dbReference type="GO" id="GO:0045892">
    <property type="term" value="P:negative regulation of DNA-templated transcription"/>
    <property type="evidence" value="ECO:0000266"/>
    <property type="project" value="RGD"/>
</dbReference>
<dbReference type="GO" id="GO:0050680">
    <property type="term" value="P:negative regulation of epithelial cell proliferation"/>
    <property type="evidence" value="ECO:0000266"/>
    <property type="project" value="RGD"/>
</dbReference>
<dbReference type="GO" id="GO:1900181">
    <property type="term" value="P:negative regulation of protein localization to nucleus"/>
    <property type="evidence" value="ECO:0000266"/>
    <property type="project" value="RGD"/>
</dbReference>
<dbReference type="GO" id="GO:0000122">
    <property type="term" value="P:negative regulation of transcription by RNA polymerase II"/>
    <property type="evidence" value="ECO:0000318"/>
    <property type="project" value="GO_Central"/>
</dbReference>
<dbReference type="GO" id="GO:2001235">
    <property type="term" value="P:positive regulation of apoptotic signaling pathway"/>
    <property type="evidence" value="ECO:0000266"/>
    <property type="project" value="RGD"/>
</dbReference>
<dbReference type="GO" id="GO:0090190">
    <property type="term" value="P:positive regulation of branching involved in ureteric bud morphogenesis"/>
    <property type="evidence" value="ECO:0000266"/>
    <property type="project" value="RGD"/>
</dbReference>
<dbReference type="GO" id="GO:0045893">
    <property type="term" value="P:positive regulation of DNA-templated transcription"/>
    <property type="evidence" value="ECO:0000266"/>
    <property type="project" value="RGD"/>
</dbReference>
<dbReference type="GO" id="GO:0034504">
    <property type="term" value="P:protein localization to nucleus"/>
    <property type="evidence" value="ECO:0000266"/>
    <property type="project" value="RGD"/>
</dbReference>
<dbReference type="GO" id="GO:0042752">
    <property type="term" value="P:regulation of circadian rhythm"/>
    <property type="evidence" value="ECO:0000266"/>
    <property type="project" value="RGD"/>
</dbReference>
<dbReference type="GO" id="GO:0006357">
    <property type="term" value="P:regulation of transcription by RNA polymerase II"/>
    <property type="evidence" value="ECO:0000266"/>
    <property type="project" value="RGD"/>
</dbReference>
<dbReference type="FunFam" id="1.10.10.1200:FF:000001">
    <property type="entry name" value="Melanoma-associated antigen D1"/>
    <property type="match status" value="1"/>
</dbReference>
<dbReference type="FunFam" id="1.10.10.1210:FF:000001">
    <property type="entry name" value="melanoma-associated antigen D1"/>
    <property type="match status" value="1"/>
</dbReference>
<dbReference type="Gene3D" id="1.10.10.1200">
    <property type="entry name" value="MAGE homology domain, winged helix WH1 motif"/>
    <property type="match status" value="1"/>
</dbReference>
<dbReference type="Gene3D" id="1.10.10.1210">
    <property type="entry name" value="MAGE homology domain, winged helix WH2 motif"/>
    <property type="match status" value="1"/>
</dbReference>
<dbReference type="InterPro" id="IPR037445">
    <property type="entry name" value="MAGE"/>
</dbReference>
<dbReference type="InterPro" id="IPR041898">
    <property type="entry name" value="MAGE_WH1"/>
</dbReference>
<dbReference type="InterPro" id="IPR041899">
    <property type="entry name" value="MAGE_WH2"/>
</dbReference>
<dbReference type="InterPro" id="IPR002190">
    <property type="entry name" value="MHD_dom"/>
</dbReference>
<dbReference type="PANTHER" id="PTHR11736:SF28">
    <property type="entry name" value="MELANOMA-ASSOCIATED ANTIGEN D1"/>
    <property type="match status" value="1"/>
</dbReference>
<dbReference type="PANTHER" id="PTHR11736">
    <property type="entry name" value="MELANOMA-ASSOCIATED ANTIGEN MAGE ANTIGEN"/>
    <property type="match status" value="1"/>
</dbReference>
<dbReference type="Pfam" id="PF01454">
    <property type="entry name" value="MAGE"/>
    <property type="match status" value="1"/>
</dbReference>
<dbReference type="SMART" id="SM01373">
    <property type="entry name" value="MAGE"/>
    <property type="match status" value="1"/>
</dbReference>
<dbReference type="PROSITE" id="PS50838">
    <property type="entry name" value="MAGE"/>
    <property type="match status" value="1"/>
</dbReference>
<accession>Q9ES73</accession>
<accession>Q66HP3</accession>
<accession>Q9JHZ6</accession>
<accession>Q9QX92</accession>
<feature type="chain" id="PRO_0000156726" description="Melanoma-associated antigen D1">
    <location>
        <begin position="1"/>
        <end position="775"/>
    </location>
</feature>
<feature type="repeat" description="1">
    <location>
        <begin position="293"/>
        <end position="298"/>
    </location>
</feature>
<feature type="repeat" description="2">
    <location>
        <begin position="299"/>
        <end position="304"/>
    </location>
</feature>
<feature type="repeat" description="3">
    <location>
        <begin position="305"/>
        <end position="310"/>
    </location>
</feature>
<feature type="repeat" description="4">
    <location>
        <begin position="329"/>
        <end position="334"/>
    </location>
</feature>
<feature type="repeat" description="5">
    <location>
        <begin position="335"/>
        <end position="340"/>
    </location>
</feature>
<feature type="repeat" description="6">
    <location>
        <begin position="341"/>
        <end position="346"/>
    </location>
</feature>
<feature type="repeat" description="7">
    <location>
        <begin position="347"/>
        <end position="352"/>
    </location>
</feature>
<feature type="repeat" description="8">
    <location>
        <begin position="353"/>
        <end position="358"/>
    </location>
</feature>
<feature type="repeat" description="9">
    <location>
        <begin position="359"/>
        <end position="364"/>
    </location>
</feature>
<feature type="repeat" description="10">
    <location>
        <begin position="365"/>
        <end position="370"/>
    </location>
</feature>
<feature type="repeat" description="11">
    <location>
        <begin position="371"/>
        <end position="376"/>
    </location>
</feature>
<feature type="repeat" description="12">
    <location>
        <begin position="377"/>
        <end position="382"/>
    </location>
</feature>
<feature type="repeat" description="13">
    <location>
        <begin position="383"/>
        <end position="388"/>
    </location>
</feature>
<feature type="repeat" description="14">
    <location>
        <begin position="389"/>
        <end position="394"/>
    </location>
</feature>
<feature type="repeat" description="15">
    <location>
        <begin position="395"/>
        <end position="400"/>
    </location>
</feature>
<feature type="repeat" description="16">
    <location>
        <begin position="401"/>
        <end position="406"/>
    </location>
</feature>
<feature type="repeat" description="17">
    <location>
        <begin position="407"/>
        <end position="412"/>
    </location>
</feature>
<feature type="repeat" description="18">
    <location>
        <begin position="413"/>
        <end position="418"/>
    </location>
</feature>
<feature type="repeat" description="19">
    <location>
        <begin position="419"/>
        <end position="424"/>
    </location>
</feature>
<feature type="repeat" description="20; approximate">
    <location>
        <begin position="425"/>
        <end position="429"/>
    </location>
</feature>
<feature type="repeat" description="21">
    <location>
        <begin position="430"/>
        <end position="435"/>
    </location>
</feature>
<feature type="repeat" description="22">
    <location>
        <begin position="436"/>
        <end position="441"/>
    </location>
</feature>
<feature type="domain" description="MAGE" evidence="2">
    <location>
        <begin position="468"/>
        <end position="666"/>
    </location>
</feature>
<feature type="region of interest" description="Disordered" evidence="3">
    <location>
        <begin position="37"/>
        <end position="330"/>
    </location>
</feature>
<feature type="region of interest" description="22 X 6 AA tandem repeats of W-[PQ]-X-P-X-X">
    <location>
        <begin position="293"/>
        <end position="441"/>
    </location>
</feature>
<feature type="region of interest" description="Disordered" evidence="3">
    <location>
        <begin position="374"/>
        <end position="407"/>
    </location>
</feature>
<feature type="region of interest" description="Disordered" evidence="3">
    <location>
        <begin position="437"/>
        <end position="463"/>
    </location>
</feature>
<feature type="compositionally biased region" description="Low complexity" evidence="3">
    <location>
        <begin position="39"/>
        <end position="50"/>
    </location>
</feature>
<feature type="compositionally biased region" description="Polar residues" evidence="3">
    <location>
        <begin position="52"/>
        <end position="63"/>
    </location>
</feature>
<feature type="compositionally biased region" description="Polar residues" evidence="3">
    <location>
        <begin position="84"/>
        <end position="100"/>
    </location>
</feature>
<feature type="compositionally biased region" description="Polar residues" evidence="3">
    <location>
        <begin position="150"/>
        <end position="180"/>
    </location>
</feature>
<feature type="compositionally biased region" description="Polar residues" evidence="3">
    <location>
        <begin position="223"/>
        <end position="237"/>
    </location>
</feature>
<feature type="compositionally biased region" description="Polar residues" evidence="3">
    <location>
        <begin position="250"/>
        <end position="260"/>
    </location>
</feature>
<feature type="compositionally biased region" description="Polar residues" evidence="3">
    <location>
        <begin position="297"/>
        <end position="330"/>
    </location>
</feature>
<feature type="compositionally biased region" description="Low complexity" evidence="3">
    <location>
        <begin position="375"/>
        <end position="406"/>
    </location>
</feature>
<feature type="compositionally biased region" description="Low complexity" evidence="3">
    <location>
        <begin position="437"/>
        <end position="452"/>
    </location>
</feature>
<feature type="sequence conflict" description="In Ref. 4; AAF75283." evidence="6" ref="4">
    <original>Q</original>
    <variation>R</variation>
    <location>
        <position position="178"/>
    </location>
</feature>
<feature type="sequence conflict" description="In Ref. 3; CAB65381 and 4; AAF75283." evidence="6" ref="3 4">
    <original>WIP</original>
    <variation>CIL</variation>
    <location>
        <begin position="425"/>
        <end position="427"/>
    </location>
</feature>
<feature type="sequence conflict" description="In Ref. 3; CAB65381 and 4; AAF75283." evidence="6" ref="3 4">
    <original>IGDEAVS</original>
    <variation>LETELCL</variation>
    <location>
        <begin position="693"/>
        <end position="699"/>
    </location>
</feature>
<feature type="sequence conflict" description="In Ref. 4; AAF75283." evidence="6" ref="4">
    <original>WS</original>
    <variation>GP</variation>
    <location>
        <begin position="724"/>
        <end position="725"/>
    </location>
</feature>
<keyword id="KW-0090">Biological rhythms</keyword>
<keyword id="KW-1003">Cell membrane</keyword>
<keyword id="KW-0963">Cytoplasm</keyword>
<keyword id="KW-0472">Membrane</keyword>
<keyword id="KW-0539">Nucleus</keyword>
<keyword id="KW-1185">Reference proteome</keyword>
<keyword id="KW-0677">Repeat</keyword>
<keyword id="KW-0825">Tumor antigen</keyword>
<keyword id="KW-0833">Ubl conjugation pathway</keyword>
<reference key="1">
    <citation type="journal article" date="2000" name="Neuron">
        <title>NRAGE, a novel MAGE protein, interacts with the p75 neurotrophin receptor and facilitates nerve growth factor dependent apoptosis.</title>
        <authorList>
            <person name="Salehi A.H."/>
            <person name="Roux P.P."/>
            <person name="Kubu C.J."/>
            <person name="Zeindler C."/>
            <person name="Bhakar A."/>
            <person name="Tannis L.-L."/>
            <person name="Verdi J.M."/>
            <person name="Barker P.A."/>
        </authorList>
    </citation>
    <scope>NUCLEOTIDE SEQUENCE [MRNA]</scope>
    <scope>FUNCTION IN APOPTOSIS</scope>
    <scope>INTERACTION WITH NGFR</scope>
    <source>
        <strain>Sprague-Dawley</strain>
        <tissue>Neural crest</tissue>
    </source>
</reference>
<reference key="2">
    <citation type="journal article" date="2004" name="Genome Res.">
        <title>The status, quality, and expansion of the NIH full-length cDNA project: the Mammalian Gene Collection (MGC).</title>
        <authorList>
            <consortium name="The MGC Project Team"/>
        </authorList>
    </citation>
    <scope>NUCLEOTIDE SEQUENCE [LARGE SCALE MRNA]</scope>
    <source>
        <tissue>Testis</tissue>
    </source>
</reference>
<reference key="3">
    <citation type="journal article" date="2000" name="Endocrinology">
        <title>A novel messenger ribonucleic acid homologous to human MAGE-D is strongly expressed in rat Sertoli cells and weakly in Leydig cells and is regulated by follitropin, lutropin, and prolactin.</title>
        <authorList>
            <person name="Hennuy B."/>
            <person name="Reiter E."/>
            <person name="Cornet A."/>
            <person name="Bruyninx M."/>
            <person name="Daukandt M."/>
            <person name="Houssa P."/>
            <person name="N'Guyen V.-H."/>
            <person name="Closset J."/>
            <person name="Hennen G."/>
        </authorList>
    </citation>
    <scope>NUCLEOTIDE SEQUENCE [MRNA] OF 206-775</scope>
    <source>
        <tissue>Testis</tissue>
    </source>
</reference>
<reference key="4">
    <citation type="submission" date="2000-06" db="EMBL/GenBank/DDBJ databases">
        <title>Rattus norvegicus mRNA for SNERG-1 protein, partial CDS.</title>
        <authorList>
            <person name="Zhang C."/>
            <person name="He F."/>
        </authorList>
    </citation>
    <scope>NUCLEOTIDE SEQUENCE [MRNA] OF 178-775</scope>
</reference>
<reference key="5">
    <citation type="journal article" date="2003" name="J. Biol. Chem.">
        <title>UNC5H1 induces apoptosis via its juxtamembrane region through an interaction with NRAGE.</title>
        <authorList>
            <person name="Williams M.E."/>
            <person name="Strickland P."/>
            <person name="Watanabe K."/>
            <person name="Hinck L."/>
        </authorList>
    </citation>
    <scope>INTERACTION WITH UNC5A</scope>
</reference>
<evidence type="ECO:0000250" key="1"/>
<evidence type="ECO:0000255" key="2">
    <source>
        <dbReference type="PROSITE-ProRule" id="PRU00127"/>
    </source>
</evidence>
<evidence type="ECO:0000256" key="3">
    <source>
        <dbReference type="SAM" id="MobiDB-lite"/>
    </source>
</evidence>
<evidence type="ECO:0000269" key="4">
    <source>
    </source>
</evidence>
<evidence type="ECO:0000269" key="5">
    <source>
    </source>
</evidence>
<evidence type="ECO:0000305" key="6"/>
<gene>
    <name type="primary">Maged1</name>
    <name type="synonym">Nrage</name>
</gene>
<name>MAGD1_RAT</name>